<gene>
    <name type="primary">MT-CYB</name>
    <name type="synonym">COB</name>
    <name type="synonym">CYTB</name>
    <name type="synonym">MTCYB</name>
</gene>
<comment type="function">
    <text evidence="2">Component of the ubiquinol-cytochrome c reductase complex (complex III or cytochrome b-c1 complex) that is part of the mitochondrial respiratory chain. The b-c1 complex mediates electron transfer from ubiquinol to cytochrome c. Contributes to the generation of a proton gradient across the mitochondrial membrane that is then used for ATP synthesis.</text>
</comment>
<comment type="cofactor">
    <cofactor evidence="2">
        <name>heme b</name>
        <dbReference type="ChEBI" id="CHEBI:60344"/>
    </cofactor>
    <text evidence="2">Binds 2 heme b groups non-covalently.</text>
</comment>
<comment type="subunit">
    <text evidence="2">The cytochrome bc1 complex contains 11 subunits: 3 respiratory subunits (MT-CYB, CYC1 and UQCRFS1), 2 core proteins (UQCRC1 and UQCRC2) and 6 low-molecular weight proteins (UQCRH/QCR6, UQCRB/QCR7, UQCRQ/QCR8, UQCR10/QCR9, UQCR11/QCR10 and a cleavage product of UQCRFS1). This cytochrome bc1 complex then forms a dimer.</text>
</comment>
<comment type="subcellular location">
    <subcellularLocation>
        <location evidence="2">Mitochondrion inner membrane</location>
        <topology evidence="2">Multi-pass membrane protein</topology>
    </subcellularLocation>
</comment>
<comment type="miscellaneous">
    <text evidence="1">Heme 1 (or BL or b562) is low-potential and absorbs at about 562 nm, and heme 2 (or BH or b566) is high-potential and absorbs at about 566 nm.</text>
</comment>
<comment type="similarity">
    <text evidence="3 4">Belongs to the cytochrome b family.</text>
</comment>
<comment type="caution">
    <text evidence="2">The full-length protein contains only eight transmembrane helices, not nine as predicted by bioinformatics tools.</text>
</comment>
<proteinExistence type="inferred from homology"/>
<reference key="1">
    <citation type="journal article" date="2004" name="Acta Chiropt.">
        <title>Phylogeny of African myotis bats (Chiroptera, Vespertilionidae) inferred from cytochrome b sequences.</title>
        <authorList>
            <person name="Stadelmann B."/>
            <person name="Jacobs D.S."/>
            <person name="Schoeman C."/>
            <person name="Ruedi M."/>
        </authorList>
    </citation>
    <scope>NUCLEOTIDE SEQUENCE [GENOMIC DNA]</scope>
    <source>
        <tissue>Wing</tissue>
    </source>
</reference>
<keyword id="KW-0249">Electron transport</keyword>
<keyword id="KW-0349">Heme</keyword>
<keyword id="KW-0408">Iron</keyword>
<keyword id="KW-0472">Membrane</keyword>
<keyword id="KW-0479">Metal-binding</keyword>
<keyword id="KW-0496">Mitochondrion</keyword>
<keyword id="KW-0999">Mitochondrion inner membrane</keyword>
<keyword id="KW-0679">Respiratory chain</keyword>
<keyword id="KW-0812">Transmembrane</keyword>
<keyword id="KW-1133">Transmembrane helix</keyword>
<keyword id="KW-0813">Transport</keyword>
<keyword id="KW-0830">Ubiquinone</keyword>
<dbReference type="EMBL" id="AJ841975">
    <property type="protein sequence ID" value="CAH56567.1"/>
    <property type="molecule type" value="Genomic_DNA"/>
</dbReference>
<dbReference type="SMR" id="Q5F4E4"/>
<dbReference type="GO" id="GO:0005743">
    <property type="term" value="C:mitochondrial inner membrane"/>
    <property type="evidence" value="ECO:0007669"/>
    <property type="project" value="UniProtKB-SubCell"/>
</dbReference>
<dbReference type="GO" id="GO:0045275">
    <property type="term" value="C:respiratory chain complex III"/>
    <property type="evidence" value="ECO:0007669"/>
    <property type="project" value="InterPro"/>
</dbReference>
<dbReference type="GO" id="GO:0046872">
    <property type="term" value="F:metal ion binding"/>
    <property type="evidence" value="ECO:0007669"/>
    <property type="project" value="UniProtKB-KW"/>
</dbReference>
<dbReference type="GO" id="GO:0008121">
    <property type="term" value="F:ubiquinol-cytochrome-c reductase activity"/>
    <property type="evidence" value="ECO:0007669"/>
    <property type="project" value="InterPro"/>
</dbReference>
<dbReference type="GO" id="GO:0006122">
    <property type="term" value="P:mitochondrial electron transport, ubiquinol to cytochrome c"/>
    <property type="evidence" value="ECO:0007669"/>
    <property type="project" value="TreeGrafter"/>
</dbReference>
<dbReference type="CDD" id="cd00290">
    <property type="entry name" value="cytochrome_b_C"/>
    <property type="match status" value="1"/>
</dbReference>
<dbReference type="CDD" id="cd00284">
    <property type="entry name" value="Cytochrome_b_N"/>
    <property type="match status" value="1"/>
</dbReference>
<dbReference type="FunFam" id="1.20.810.10:FF:000002">
    <property type="entry name" value="Cytochrome b"/>
    <property type="match status" value="1"/>
</dbReference>
<dbReference type="Gene3D" id="1.20.810.10">
    <property type="entry name" value="Cytochrome Bc1 Complex, Chain C"/>
    <property type="match status" value="1"/>
</dbReference>
<dbReference type="InterPro" id="IPR005798">
    <property type="entry name" value="Cyt_b/b6_C"/>
</dbReference>
<dbReference type="InterPro" id="IPR036150">
    <property type="entry name" value="Cyt_b/b6_C_sf"/>
</dbReference>
<dbReference type="InterPro" id="IPR005797">
    <property type="entry name" value="Cyt_b/b6_N"/>
</dbReference>
<dbReference type="InterPro" id="IPR027387">
    <property type="entry name" value="Cytb/b6-like_sf"/>
</dbReference>
<dbReference type="InterPro" id="IPR030689">
    <property type="entry name" value="Cytochrome_b"/>
</dbReference>
<dbReference type="InterPro" id="IPR048260">
    <property type="entry name" value="Cytochrome_b_C_euk/bac"/>
</dbReference>
<dbReference type="InterPro" id="IPR048259">
    <property type="entry name" value="Cytochrome_b_N_euk/bac"/>
</dbReference>
<dbReference type="InterPro" id="IPR016174">
    <property type="entry name" value="Di-haem_cyt_TM"/>
</dbReference>
<dbReference type="PANTHER" id="PTHR19271">
    <property type="entry name" value="CYTOCHROME B"/>
    <property type="match status" value="1"/>
</dbReference>
<dbReference type="PANTHER" id="PTHR19271:SF16">
    <property type="entry name" value="CYTOCHROME B"/>
    <property type="match status" value="1"/>
</dbReference>
<dbReference type="Pfam" id="PF00032">
    <property type="entry name" value="Cytochrom_B_C"/>
    <property type="match status" value="1"/>
</dbReference>
<dbReference type="Pfam" id="PF00033">
    <property type="entry name" value="Cytochrome_B"/>
    <property type="match status" value="1"/>
</dbReference>
<dbReference type="PIRSF" id="PIRSF038885">
    <property type="entry name" value="COB"/>
    <property type="match status" value="1"/>
</dbReference>
<dbReference type="SUPFAM" id="SSF81648">
    <property type="entry name" value="a domain/subunit of cytochrome bc1 complex (Ubiquinol-cytochrome c reductase)"/>
    <property type="match status" value="1"/>
</dbReference>
<dbReference type="SUPFAM" id="SSF81342">
    <property type="entry name" value="Transmembrane di-heme cytochromes"/>
    <property type="match status" value="1"/>
</dbReference>
<dbReference type="PROSITE" id="PS51003">
    <property type="entry name" value="CYTB_CTER"/>
    <property type="match status" value="1"/>
</dbReference>
<dbReference type="PROSITE" id="PS51002">
    <property type="entry name" value="CYTB_NTER"/>
    <property type="match status" value="1"/>
</dbReference>
<accession>Q5F4E4</accession>
<sequence length="379" mass="42601">MTNIRKSHPLIKIINSSLVDLPAPSNISSWWNFGSLLGVCLAIQILTGLFLAMHYTADTATAFNSVTHICRDVNYGWILRYLHANGASMFFICLYLHVGRGLYYGSYTLTETWNIGILLLFAVMATAFMGYVLPWGQMSFWGATVITNLLSAIPYIGTDLVEWIWGGFSVDKATLTRFFAFHFLLPFIIAAMVMVHLLFLHETGSNNPTGIPSDMDAIPFHPYYTIKDALGFLIMIMALLTLVLFSPDLLGDPDNYTPANPLNTPPHIKPEWYFLFAYAILRSIPNKLGGVLALVLSILVLAIIPLLHTSKQRSMTFRPISQCLFWLLVANLLTLTWIGGQPVEHPYIIIGQLASILYFMIILILMPLVSIMENYLLKW</sequence>
<organism>
    <name type="scientific">Miniopterus fraterculus</name>
    <name type="common">Lesser long-fingered bat</name>
    <dbReference type="NCBI Taxonomy" id="258933"/>
    <lineage>
        <taxon>Eukaryota</taxon>
        <taxon>Metazoa</taxon>
        <taxon>Chordata</taxon>
        <taxon>Craniata</taxon>
        <taxon>Vertebrata</taxon>
        <taxon>Euteleostomi</taxon>
        <taxon>Mammalia</taxon>
        <taxon>Eutheria</taxon>
        <taxon>Laurasiatheria</taxon>
        <taxon>Chiroptera</taxon>
        <taxon>Yangochiroptera</taxon>
        <taxon>Miniopteridae</taxon>
        <taxon>Miniopterus</taxon>
    </lineage>
</organism>
<geneLocation type="mitochondrion"/>
<name>CYB_MINFR</name>
<feature type="chain" id="PRO_0000254715" description="Cytochrome b">
    <location>
        <begin position="1"/>
        <end position="379"/>
    </location>
</feature>
<feature type="transmembrane region" description="Helical" evidence="2">
    <location>
        <begin position="33"/>
        <end position="53"/>
    </location>
</feature>
<feature type="transmembrane region" description="Helical" evidence="2">
    <location>
        <begin position="77"/>
        <end position="98"/>
    </location>
</feature>
<feature type="transmembrane region" description="Helical" evidence="2">
    <location>
        <begin position="113"/>
        <end position="133"/>
    </location>
</feature>
<feature type="transmembrane region" description="Helical" evidence="2">
    <location>
        <begin position="178"/>
        <end position="198"/>
    </location>
</feature>
<feature type="transmembrane region" description="Helical" evidence="2">
    <location>
        <begin position="226"/>
        <end position="246"/>
    </location>
</feature>
<feature type="transmembrane region" description="Helical" evidence="2">
    <location>
        <begin position="288"/>
        <end position="308"/>
    </location>
</feature>
<feature type="transmembrane region" description="Helical" evidence="2">
    <location>
        <begin position="320"/>
        <end position="340"/>
    </location>
</feature>
<feature type="transmembrane region" description="Helical" evidence="2">
    <location>
        <begin position="347"/>
        <end position="367"/>
    </location>
</feature>
<feature type="binding site" description="axial binding residue" evidence="2">
    <location>
        <position position="83"/>
    </location>
    <ligand>
        <name>heme b</name>
        <dbReference type="ChEBI" id="CHEBI:60344"/>
        <label>b562</label>
    </ligand>
    <ligandPart>
        <name>Fe</name>
        <dbReference type="ChEBI" id="CHEBI:18248"/>
    </ligandPart>
</feature>
<feature type="binding site" description="axial binding residue" evidence="2">
    <location>
        <position position="97"/>
    </location>
    <ligand>
        <name>heme b</name>
        <dbReference type="ChEBI" id="CHEBI:60344"/>
        <label>b566</label>
    </ligand>
    <ligandPart>
        <name>Fe</name>
        <dbReference type="ChEBI" id="CHEBI:18248"/>
    </ligandPart>
</feature>
<feature type="binding site" description="axial binding residue" evidence="2">
    <location>
        <position position="182"/>
    </location>
    <ligand>
        <name>heme b</name>
        <dbReference type="ChEBI" id="CHEBI:60344"/>
        <label>b562</label>
    </ligand>
    <ligandPart>
        <name>Fe</name>
        <dbReference type="ChEBI" id="CHEBI:18248"/>
    </ligandPart>
</feature>
<feature type="binding site" description="axial binding residue" evidence="2">
    <location>
        <position position="196"/>
    </location>
    <ligand>
        <name>heme b</name>
        <dbReference type="ChEBI" id="CHEBI:60344"/>
        <label>b566</label>
    </ligand>
    <ligandPart>
        <name>Fe</name>
        <dbReference type="ChEBI" id="CHEBI:18248"/>
    </ligandPart>
</feature>
<feature type="binding site" evidence="2">
    <location>
        <position position="201"/>
    </location>
    <ligand>
        <name>a ubiquinone</name>
        <dbReference type="ChEBI" id="CHEBI:16389"/>
    </ligand>
</feature>
<evidence type="ECO:0000250" key="1"/>
<evidence type="ECO:0000250" key="2">
    <source>
        <dbReference type="UniProtKB" id="P00157"/>
    </source>
</evidence>
<evidence type="ECO:0000255" key="3">
    <source>
        <dbReference type="PROSITE-ProRule" id="PRU00967"/>
    </source>
</evidence>
<evidence type="ECO:0000255" key="4">
    <source>
        <dbReference type="PROSITE-ProRule" id="PRU00968"/>
    </source>
</evidence>
<protein>
    <recommendedName>
        <fullName>Cytochrome b</fullName>
    </recommendedName>
    <alternativeName>
        <fullName>Complex III subunit 3</fullName>
    </alternativeName>
    <alternativeName>
        <fullName>Complex III subunit III</fullName>
    </alternativeName>
    <alternativeName>
        <fullName>Cytochrome b-c1 complex subunit 3</fullName>
    </alternativeName>
    <alternativeName>
        <fullName>Ubiquinol-cytochrome-c reductase complex cytochrome b subunit</fullName>
    </alternativeName>
</protein>